<proteinExistence type="evidence at protein level"/>
<protein>
    <recommendedName>
        <fullName>Growth factor receptor-bound protein 2</fullName>
    </recommendedName>
    <alternativeName>
        <fullName>Adapter protein GRB2</fullName>
    </alternativeName>
    <alternativeName>
        <fullName>SH2/SH3 adapter GRB2</fullName>
    </alternativeName>
</protein>
<evidence type="ECO:0000250" key="1"/>
<evidence type="ECO:0000250" key="2">
    <source>
        <dbReference type="UniProtKB" id="P62993"/>
    </source>
</evidence>
<evidence type="ECO:0000255" key="3">
    <source>
        <dbReference type="PROSITE-ProRule" id="PRU00191"/>
    </source>
</evidence>
<evidence type="ECO:0000255" key="4">
    <source>
        <dbReference type="PROSITE-ProRule" id="PRU00192"/>
    </source>
</evidence>
<evidence type="ECO:0000269" key="5">
    <source>
    </source>
</evidence>
<evidence type="ECO:0000269" key="6">
    <source>
    </source>
</evidence>
<evidence type="ECO:0000269" key="7">
    <source>
    </source>
</evidence>
<evidence type="ECO:0000269" key="8">
    <source>
    </source>
</evidence>
<evidence type="ECO:0000269" key="9">
    <source>
    </source>
</evidence>
<evidence type="ECO:0000269" key="10">
    <source>
    </source>
</evidence>
<evidence type="ECO:0000269" key="11">
    <source>
    </source>
</evidence>
<evidence type="ECO:0000269" key="12">
    <source>
    </source>
</evidence>
<evidence type="ECO:0000269" key="13">
    <source>
    </source>
</evidence>
<evidence type="ECO:0000269" key="14">
    <source>
    </source>
</evidence>
<evidence type="ECO:0000269" key="15">
    <source>
    </source>
</evidence>
<evidence type="ECO:0000269" key="16">
    <source>
    </source>
</evidence>
<evidence type="ECO:0000269" key="17">
    <source>
    </source>
</evidence>
<evidence type="ECO:0000269" key="18">
    <source>
    </source>
</evidence>
<evidence type="ECO:0000269" key="19">
    <source>
    </source>
</evidence>
<evidence type="ECO:0000269" key="20">
    <source>
    </source>
</evidence>
<evidence type="ECO:0000269" key="21">
    <source>
    </source>
</evidence>
<evidence type="ECO:0000269" key="22">
    <source>
    </source>
</evidence>
<evidence type="ECO:0000269" key="23">
    <source>
    </source>
</evidence>
<evidence type="ECO:0000269" key="24">
    <source>
    </source>
</evidence>
<evidence type="ECO:0000269" key="25">
    <source>
    </source>
</evidence>
<evidence type="ECO:0000269" key="26">
    <source>
    </source>
</evidence>
<evidence type="ECO:0000269" key="27">
    <source>
    </source>
</evidence>
<evidence type="ECO:0000269" key="28">
    <source>
    </source>
</evidence>
<evidence type="ECO:0000269" key="29">
    <source>
    </source>
</evidence>
<evidence type="ECO:0000269" key="30">
    <source>
    </source>
</evidence>
<evidence type="ECO:0000269" key="31">
    <source>
    </source>
</evidence>
<evidence type="ECO:0000269" key="32">
    <source>
    </source>
</evidence>
<evidence type="ECO:0000269" key="33">
    <source>
    </source>
</evidence>
<evidence type="ECO:0000269" key="34">
    <source>
    </source>
</evidence>
<evidence type="ECO:0000269" key="35">
    <source>
    </source>
</evidence>
<evidence type="ECO:0000269" key="36">
    <source>
    </source>
</evidence>
<evidence type="ECO:0000269" key="37">
    <source>
    </source>
</evidence>
<evidence type="ECO:0000269" key="38">
    <source>
    </source>
</evidence>
<evidence type="ECO:0000269" key="39">
    <source>
    </source>
</evidence>
<evidence type="ECO:0000269" key="40">
    <source>
    </source>
</evidence>
<evidence type="ECO:0000303" key="41">
    <source ref="2"/>
</evidence>
<evidence type="ECO:0000305" key="42"/>
<evidence type="ECO:0007829" key="43">
    <source>
        <dbReference type="PDB" id="1GBQ"/>
    </source>
</evidence>
<evidence type="ECO:0007829" key="44">
    <source>
        <dbReference type="PDB" id="2GBQ"/>
    </source>
</evidence>
<sequence length="217" mass="25238">MEAIAKYDFKATADDELSFKRGDILKVLNEECDQNWYKAELNGKDGFIPKNYIEMKPHPWFFGKIPRAKAEEMLSKQRHDGAFLIRESESAPGDFSLSVKFGNDVQHFKVLRDGAGKYFLWVVKFNSLNELVDYHRSTSVSRNQQIFLRDIEQMPQQPTYVQALFDFDPQEDGELGFRRGDFIHVMDNSDPNWWKGACHGQTGMFPRNYVTPVNRNV</sequence>
<gene>
    <name type="primary">Grb2</name>
</gene>
<comment type="function">
    <text evidence="2 32 34">Non-enzymatic adapter protein that plays a pivotal role in precisely regulated signaling cascades from cell surface receptors to cellular responses, including signaling transduction and gene expression (PubMed:28964849). Thus, participates in many biological processes including regulation of innate and adaptive immunity, autophagy, DNA repair or necroptosis. Controls signaling complexes at the T-cell antigen receptor to facilitate the activation, differentiation, and function of T-cells. Mechanistically, engagement of the TCR leads to phosphorylation of the adapter protein LAT, which serves as docking site for GRB2. In turn, GRB2 establishes a a connection with SOS1 that acts as a guanine nucleotide exchange factor and serves as a critical regulator of KRAS/RAF1 leading to MAPKs translocation to the nucleus and activation. Also functions a role in B-cell activation by amplifying Ca(2+) mobilization and activation of the ERK MAP kinase pathway upon recruitment to the phosphorylated B-cell antigen receptor (BCR) (PubMed:34697226). Plays a role in switching between autophagy and programmed necrosis upstream of EGFR by interacting with components of necrosomes including RIPK1 and with autophagy regulators SQSTM1 and BECN1. Regulates miRNA biogenesis by forming a functional ternary complex with AGO2 and DICER1. Functions in the replication stress response by protecting DNA at stalled replication forks from MRE11-mediated degradation. Mechanistically, inhibits RAD51 ATPase activity to stabilize RAD51 on stalled replication forks. Additionally, directly recruits and later releases MRE11 at DNA damage sites during the homology-directed repair (HDR) process.</text>
</comment>
<comment type="function">
    <molecule>Isoform 2</molecule>
    <text evidence="2">Does not bind to phosphorylated epidermal growth factor receptor (EGFR) but inhibits EGF-induced transactivation of a RAS-responsive element. Acts as a dominant negative protein over GRB2 and by suppressing proliferative signals, may trigger active programmed cell death. Mechanistically, inhibits RAS-ERK signaling and downstream cell proliferation by competing with GRB2 for SOS1 binding and thus by regulating SOS1 membrane recruitment.</text>
</comment>
<comment type="subunit">
    <text evidence="2 5 6 7 8 9 10 11 12 13 14 15 16 17 18 19 20 21 22 23 24 25 26 27 28 29 30 31 33 35 36 37 38 39 40">Associates (via SH2 domain) with activated EGF and PDGF receptors (tyrosine phosphorylated) (By similarity). Interacts with PDGFRA (tyrosine phosphorylated); the interaction may be indirect (PubMed:8943348). Interacts with IRS4 (when Tyr-phosphorylated) (PubMed:11113178). Also associates to other cellular Tyr-phosphorylated proteins such as SIT1, IRS1, IRS2, SHC and LNK; probably via the concerted action of both its SH2 and SH3 domains (By similarity). It also seems to interact with RAS in the signaling pathway leading to DNA synthesis. Interacts with SOS1 (By similarity). Forms a complex with MUC1 and SOS1, through interaction of the SH3 domains with SOS1 and the SH2 domain with phosphorylated MUC1 (By similarity). Interacts with phosphorylated MET (By similarity). Interacts with phosphorylated TOM1L1 (PubMed:11711534). Interacts with the phosphorylated C-terminus of SH2B2 (By similarity). Interacts with phosphorylated SIT1, LAX1, LAT, LAT2 and LIME1 upon TCR and/or BCR activation (By similarity) (PubMed:14610044, PubMed:15477348, PubMed:15477350, PubMed:16249387, PubMed:22561606). Interacts with NISCH, PTPNS1 and REPS2 (By similarity). Interacts with syntrophin SNTA1 (PubMed:11551227). Interacts (via SH3 domains) with REPS1 (PubMed:9395447). Interacts (via SH3 domains) with PIK3C2B (By similarity). Interacts with CBL and CBLB (By similarity). Interacts with AJUBA and CLNK (PubMed:10330178, PubMed:11463797). Interacts (via SH2 domain) with TEK/TIE2 (tyrosine phosphorylated) (PubMed:10521483). Interacts with SHB, INPP5D/SHIP1, SKAP1 and SKAP2 (By similarity). Interacts with PTPN11 (PubMed:8943348). Interacts with PRNP (PubMed:11571277). Interacts with RALGPS1 (By similarity). Also interacts with HCST (PubMed:16582911). Interacts with KDR (PubMed:16966330). Interacts with FLT1 (tyrosine-phosphorylated) (PubMed:9722576). Interacts with GAPT and PTPRE (By similarity). Interacts (via SH2 domain) with KIF26A (By similarity). Interacts (via SH3 2) with GAB2 (PubMed:10068651). Interacts with ADAM15 (By similarity). Interacts with THEMIS2 (PubMed:20644716). Interacts (via SH2 domain) with AXL (phosphorylated) (By similarity). Interacts (via SH2 domain) with KIT (phosphorylated) (PubMed:10377264). Interacts with PTPRJ and BCR (By similarity). Interacts with PTPN23 (By similarity). Interacts with FLT4 (tyrosine phosphorylated) (By similarity). Interacts with EPHB1 and SHC1; activates the MAPK/ERK cascade to regulate cell migration (PubMed:12925710). Part of a complex including TNK2, GRB2 and one receptor tyrosine kinase (RTK) such as AXL and PDGFRL, in which GRB2 promotes RTK recruitment by TNK2 (By similarity). Interacts (via SH2 domain) with CSF1R (tyrosine phosphorylated) (PubMed:9312046). Interacts with ERBB4 (By similarity). Interacts with NTRK1 (phosphorylated upon ligand-binding) (By similarity). Interacts with PTK2/FAK1 (tyrosine phosphorylated) (PubMed:7997267). Interacts with PTK2B/PYK2 (tyrosine phosphorylated) (By similarity). Interacts (via SH2-domain) with SCIMP; this interaction is dependent on phosphorylation of SCIMP 'Tyr-58' (PubMed:21930792, PubMed:28098138, PubMed:28290451). Interacts (via SH3 domains) with GAREM1 (via proline-rich domain and tyrosine phosphorylated); the interaction occurs upon EGF stimulation (By similarity). Interacts with DAB2 (PubMed:9569023). Interacts with TESPA1 (By similarity). Interacts with THEMIS (PubMed:19597497, PubMed:19597498, PubMed:19805304, PubMed:22561606). Interacts with PLCG1, LAT and THEMIS upon TCR activation in thymocytes; the association is weaker in the absence of TESPA1 (PubMed:22561606). Interacts with CD28 (By similarity). Interacts with RAB13; may recruit RAB13 to the leading edge of migrating endothelial cells where it can activate RHOA (PubMed:21543326). Interacts with ASAP3 (phosphorylated form) (By similarity). Interacts (via SH2 domain) with PTPRH (phosphorylated form) (PubMed:20398064). Interacts with PTPRO (phosphorylated form) (PubMed:20398064). Interacts with PTPRB (phosphorylated form) (PubMed:20398064). Interacts (via SH3 domain 2) with PRR14 (via proline-rich region) (By similarity). Interacts with DENND2B (By similarity). Interacts with SPRY2 (By similarity). Interacts with LRRC8A (PubMed:32930093). Interacts with PEAK1 (By similarity). Interacts with FCRL1 (By similarity). Interacts with PCNA (By similarity). Interacts with CD19 (By similarity). Interacts with BECN1 (By similarity). Interacts with RAD51; the interaction inhibits RAD51 ATPase to stabilize RAD51-DNA complex at stalled replication forks. Interacts with MRE11; this interaction recruits MRE11 to the DNA damage sites. Interacts with RIPK1 ans SQSTM1; these interactions play a critical role in regulating programmed necrosis (By similarity). Interacts with AGO2; this interaction is important for the formation of a ternary complex containing GRB2, AGO2 and DICER1 (By similarity). Interacts with TIGIT; this interaction inhibits PI3K and MAPK signaling cascades (By similarity). Interacts with CD226; this interaction leads to activation of VAV1, PI3K and PLCG1 (PubMed:26552706).</text>
</comment>
<comment type="subunit">
    <molecule>Isoform 2</molecule>
    <text evidence="2">Interacts with SOS1; this interaction competes with GRB2 to bind SOS1 via its N-terminal SH3 domain.</text>
</comment>
<comment type="interaction">
    <interactant intactId="EBI-1688">
        <id>Q60631</id>
    </interactant>
    <interactant intactId="EBI-641814">
        <id>O54737</id>
        <label>Blnk</label>
    </interactant>
    <organismsDiffer>false</organismsDiffer>
    <experiments>4</experiments>
</comment>
<comment type="interaction">
    <interactant intactId="EBI-1688">
        <id>Q60631</id>
    </interactant>
    <interactant intactId="EBI-625119">
        <id>P35991</id>
        <label>Btk</label>
    </interactant>
    <organismsDiffer>false</organismsDiffer>
    <experiments>4</experiments>
</comment>
<comment type="interaction">
    <interactant intactId="EBI-1688">
        <id>Q60631</id>
    </interactant>
    <interactant intactId="EBI-682463">
        <id>B9EKI5</id>
        <label>Cblb</label>
    </interactant>
    <organismsDiffer>false</organismsDiffer>
    <experiments>3</experiments>
</comment>
<comment type="interaction">
    <interactant intactId="EBI-1688">
        <id>Q60631</id>
    </interactant>
    <interactant intactId="EBI-300059">
        <id>P35329</id>
        <label>Cd22</label>
    </interactant>
    <organismsDiffer>false</organismsDiffer>
    <experiments>4</experiments>
</comment>
<comment type="interaction">
    <interactant intactId="EBI-1688">
        <id>Q60631</id>
    </interactant>
    <interactant intactId="EBI-1391846">
        <id>P98078</id>
        <label>Dab2</label>
    </interactant>
    <organismsDiffer>false</organismsDiffer>
    <experiments>4</experiments>
</comment>
<comment type="interaction">
    <interactant intactId="EBI-1688">
        <id>Q60631</id>
    </interactant>
    <interactant intactId="EBI-643375">
        <id>Q99JZ7</id>
        <label>Errfi1</label>
    </interactant>
    <organismsDiffer>false</organismsDiffer>
    <experiments>3</experiments>
</comment>
<comment type="interaction">
    <interactant intactId="EBI-1688">
        <id>Q60631</id>
    </interactant>
    <interactant intactId="EBI-6880000">
        <id>Q8C180</id>
        <label>Frs2</label>
    </interactant>
    <organismsDiffer>false</organismsDiffer>
    <experiments>5</experiments>
</comment>
<comment type="interaction">
    <interactant intactId="EBI-1688">
        <id>Q60631</id>
    </interactant>
    <interactant intactId="EBI-644784">
        <id>Q9QYY0</id>
        <label>Gab1</label>
    </interactant>
    <organismsDiffer>false</organismsDiffer>
    <experiments>8</experiments>
</comment>
<comment type="interaction">
    <interactant intactId="EBI-1688">
        <id>Q60631</id>
    </interactant>
    <interactant intactId="EBI-519077">
        <id>Q60749</id>
        <label>Khdrbs1</label>
    </interactant>
    <organismsDiffer>false</organismsDiffer>
    <experiments>2</experiments>
</comment>
<comment type="interaction">
    <interactant intactId="EBI-1688">
        <id>Q60631</id>
    </interactant>
    <interactant intactId="EBI-2480646">
        <id>Q52KG5</id>
        <label>Kif26a</label>
    </interactant>
    <organismsDiffer>false</organismsDiffer>
    <experiments>2</experiments>
</comment>
<comment type="interaction">
    <interactant intactId="EBI-1688">
        <id>Q60631</id>
    </interactant>
    <interactant intactId="EBI-6390034">
        <id>O54957</id>
        <label>Lat</label>
    </interactant>
    <organismsDiffer>false</organismsDiffer>
    <experiments>5</experiments>
</comment>
<comment type="interaction">
    <interactant intactId="EBI-1688">
        <id>Q60631</id>
    </interactant>
    <interactant intactId="EBI-300133">
        <id>Q62077</id>
        <label>Plcg1</label>
    </interactant>
    <organismsDiffer>false</organismsDiffer>
    <experiments>2</experiments>
</comment>
<comment type="interaction">
    <interactant intactId="EBI-1688">
        <id>Q60631</id>
    </interactant>
    <interactant intactId="EBI-768613">
        <id>P04925</id>
        <label>Prnp</label>
    </interactant>
    <organismsDiffer>false</organismsDiffer>
    <experiments>7</experiments>
</comment>
<comment type="interaction">
    <interactant intactId="EBI-1688">
        <id>Q60631</id>
    </interactant>
    <interactant intactId="EBI-397236">
        <id>P35235</id>
        <label>Ptpn11</label>
    </interactant>
    <organismsDiffer>false</organismsDiffer>
    <experiments>3</experiments>
</comment>
<comment type="interaction">
    <interactant intactId="EBI-1688">
        <id>Q60631</id>
    </interactant>
    <interactant intactId="EBI-6597520">
        <id>P18052</id>
        <label>Ptpra</label>
    </interactant>
    <organismsDiffer>false</organismsDiffer>
    <experiments>4</experiments>
</comment>
<comment type="interaction">
    <interactant intactId="EBI-1688">
        <id>Q60631</id>
    </interactant>
    <interactant intactId="EBI-644719">
        <id>Q91ZZ2</id>
        <label>Rapgef1</label>
    </interactant>
    <organismsDiffer>false</organismsDiffer>
    <experiments>3</experiments>
</comment>
<comment type="interaction">
    <interactant intactId="EBI-1688">
        <id>Q60631</id>
    </interactant>
    <interactant intactId="EBI-300201">
        <id>P98083</id>
        <label>Shc1</label>
    </interactant>
    <organismsDiffer>false</organismsDiffer>
    <experiments>8</experiments>
</comment>
<comment type="interaction">
    <interactant intactId="EBI-1688">
        <id>Q60631</id>
    </interactant>
    <interactant intactId="EBI-295952">
        <id>Q61234</id>
        <label>Snta1</label>
    </interactant>
    <organismsDiffer>false</organismsDiffer>
    <experiments>3</experiments>
</comment>
<comment type="interaction">
    <interactant intactId="EBI-1688">
        <id>Q60631</id>
    </interactant>
    <interactant intactId="EBI-1693">
        <id>Q62245</id>
        <label>Sos1</label>
    </interactant>
    <organismsDiffer>false</organismsDiffer>
    <experiments>7</experiments>
</comment>
<comment type="interaction">
    <interactant intactId="EBI-1688">
        <id>Q60631</id>
    </interactant>
    <interactant intactId="EBI-395573">
        <id>Q02384</id>
        <label>Sos2</label>
    </interactant>
    <organismsDiffer>false</organismsDiffer>
    <experiments>5</experiments>
</comment>
<comment type="interaction">
    <interactant intactId="EBI-1688">
        <id>Q60631</id>
    </interactant>
    <interactant intactId="EBI-7099626">
        <id>Q02858</id>
        <label>Tek</label>
    </interactant>
    <organismsDiffer>false</organismsDiffer>
    <experiments>3</experiments>
</comment>
<comment type="interaction">
    <interactant intactId="EBI-1688">
        <id>Q60631</id>
    </interactant>
    <interactant intactId="EBI-644712">
        <id>Q99PM9</id>
        <label>Uck2</label>
    </interactant>
    <organismsDiffer>false</organismsDiffer>
    <experiments>3</experiments>
</comment>
<comment type="interaction">
    <interactant intactId="EBI-15532571">
        <id>Q60631-1</id>
    </interactant>
    <interactant intactId="EBI-15806957">
        <id>Q8BGW0-1</id>
        <label>Themis</label>
    </interactant>
    <organismsDiffer>false</organismsDiffer>
    <experiments>3</experiments>
</comment>
<comment type="subcellular location">
    <subcellularLocation>
        <location evidence="2">Nucleus</location>
    </subcellularLocation>
    <subcellularLocation>
        <location evidence="2">Cytoplasm</location>
    </subcellularLocation>
    <subcellularLocation>
        <location evidence="2">Endosome</location>
    </subcellularLocation>
    <subcellularLocation>
        <location evidence="12">Golgi apparatus</location>
    </subcellularLocation>
</comment>
<comment type="alternative products">
    <event type="alternative splicing"/>
    <isoform>
        <id>Q60631-1</id>
        <name>1</name>
        <sequence type="displayed"/>
    </isoform>
    <isoform>
        <id>Q60631-2</id>
        <name>2</name>
        <name>GRB3-3</name>
        <sequence type="described" ref="VSP_001841"/>
    </isoform>
    <text>Additional isoforms seem to exist.</text>
</comment>
<comment type="tissue specificity">
    <text evidence="30">Expressed in macrophages.</text>
</comment>
<comment type="domain">
    <text evidence="1">The SH3 domains mediate interaction with RALGPS1 and SHB.</text>
</comment>
<comment type="PTM">
    <text evidence="2">Phosphorylation of Tyr-209 in the C-terminal SH3 domain reduces its binding to SOS1.</text>
</comment>
<comment type="PTM">
    <text evidence="2">Ubiquitinated by RNF173, leading to proteasomal degradation and inhibition of the RAF/MEK/ERK pathway. In the nucleus, polyubiquitinated by RBBP6 at Lys-109 at DNA damage sites.</text>
</comment>
<comment type="disruption phenotype">
    <text evidence="34">In a conditional knockout mouse model, Grb2 deletion induces a rapid decline of myeloid progenitors (CMP), myeloid/erythroid progenitors (MEP) and granulocyte/macrophage progenitors (GMP) and a progressive decline of long-term-HSC and intermediate-term-HSC numbers.</text>
</comment>
<comment type="similarity">
    <text evidence="42">Belongs to the GRB2/sem-5/DRK family.</text>
</comment>
<comment type="online information" name="Wikipedia">
    <link uri="https://en.wikipedia.org/wiki/Grb2"/>
    <text>Grb2 entry</text>
</comment>
<reference key="1">
    <citation type="journal article" date="1993" name="Mol. Cell. Biol.">
        <title>Molecular cloning of the mouse grb2 gene: differential interaction of the Grb2 adaptor protein with epidermal growth factor and nerve growth factor receptors.</title>
        <authorList>
            <person name="Suen K."/>
            <person name="Bustelo X.R."/>
            <person name="Pawson T."/>
            <person name="Barbacid M."/>
        </authorList>
    </citation>
    <scope>NUCLEOTIDE SEQUENCE [MRNA]</scope>
    <source>
        <strain>BALB/cJ</strain>
    </source>
</reference>
<reference key="2">
    <citation type="submission" date="1996-06" db="EMBL/GenBank/DDBJ databases">
        <authorList>
            <person name="Tanaka S."/>
        </authorList>
    </citation>
    <scope>NUCLEOTIDE SEQUENCE [MRNA] (ISOFORM 2)</scope>
    <source>
        <strain>BALB/cJ</strain>
    </source>
</reference>
<reference key="3">
    <citation type="journal article" date="2004" name="Genome Res.">
        <title>The status, quality, and expansion of the NIH full-length cDNA project: the Mammalian Gene Collection (MGC).</title>
        <authorList>
            <consortium name="The MGC Project Team"/>
        </authorList>
    </citation>
    <scope>NUCLEOTIDE SEQUENCE [LARGE SCALE MRNA] (ISOFORM 1)</scope>
    <source>
        <strain>C57BL/6J</strain>
        <strain>FVB/N</strain>
        <tissue>Brain</tissue>
        <tissue>Mammary gland</tissue>
    </source>
</reference>
<reference key="4">
    <citation type="submission" date="2007-03" db="UniProtKB">
        <authorList>
            <person name="Lubec G."/>
            <person name="Klug S."/>
        </authorList>
    </citation>
    <scope>PROTEIN SEQUENCE OF 125-136</scope>
    <scope>IDENTIFICATION BY MASS SPECTROMETRY</scope>
    <source>
        <tissue>Hippocampus</tissue>
    </source>
</reference>
<reference key="5">
    <citation type="journal article" date="1994" name="Nature">
        <title>Integrin-mediated signal transduction linked to Ras pathway by GRB2 binding to focal adhesion kinase.</title>
        <authorList>
            <person name="Schlaepfer D.D."/>
            <person name="Hanks S.K."/>
            <person name="Hunter T."/>
            <person name="van der Geer P."/>
        </authorList>
    </citation>
    <scope>INTERACTION WITH PTK2/FAK1</scope>
</reference>
<reference key="6">
    <citation type="journal article" date="1996" name="Mol. Cell. Biol.">
        <title>Phosphorylation of tyrosine 720 in the platelet-derived growth factor alpha receptor is required for binding of Grb2 and SHP-2 but not for activation of Ras or cell proliferation.</title>
        <authorList>
            <person name="Bazenet C.E."/>
            <person name="Gelderloos J.A."/>
            <person name="Kazlauskas A."/>
        </authorList>
    </citation>
    <scope>INTERACTION WITH PDGFRA AND PTPN11</scope>
</reference>
<reference key="7">
    <citation type="journal article" date="1997" name="EMBO J.">
        <title>Sequential activation of phoshatidylinositol 3-kinase and phospholipase C-gamma2 by the M-CSF receptor is necessary for differentiation signaling.</title>
        <authorList>
            <person name="Bourette R.P."/>
            <person name="Myles G.M."/>
            <person name="Choi J.L."/>
            <person name="Rohrschneider L.R."/>
        </authorList>
    </citation>
    <scope>INTERACTION WITH CSF1R</scope>
    <scope>PHOSPHORYLATION</scope>
</reference>
<reference key="8">
    <citation type="journal article" date="1997" name="J. Biol. Chem.">
        <title>An eps homology (EH) domain protein that binds to the ral-GTPase target, RalBP1.</title>
        <authorList>
            <person name="Yamaguchi A."/>
            <person name="Urano T."/>
            <person name="Goi T."/>
            <person name="Feig L.A."/>
        </authorList>
    </citation>
    <scope>INTERACTION WITH REPS1</scope>
    <source>
        <tissue>Muscle</tissue>
    </source>
</reference>
<reference key="9">
    <citation type="journal article" date="1998" name="J. Biol. Chem.">
        <title>Identification of vascular endothelial growth factor receptor-1 tyrosine phosphorylation sites and binding of SH2 domain-containing molecules.</title>
        <authorList>
            <person name="Ito N."/>
            <person name="Wernstedt C."/>
            <person name="Engstrom U."/>
            <person name="Claesson-Welsh L."/>
        </authorList>
    </citation>
    <scope>INTERACTION WITH FLT1</scope>
</reference>
<reference key="10">
    <citation type="journal article" date="1998" name="Oncogene">
        <title>Disabled-2 (Dab2) is an SH3 domain-binding partner of Grb2.</title>
        <authorList>
            <person name="Xu X.X."/>
            <person name="Yi T."/>
            <person name="Tang B."/>
            <person name="Lambeth J.D."/>
        </authorList>
    </citation>
    <scope>INTERACTION WITH DAB2</scope>
</reference>
<reference key="11">
    <citation type="journal article" date="1999" name="Biochem. J.">
        <title>Identification of Tyr-703 and Tyr-936 as the primary association sites for Grb2 and Grb7 in the c-Kit/stem cell factor receptor.</title>
        <authorList>
            <person name="Thommes K."/>
            <person name="Lennartsson J."/>
            <person name="Carlberg M."/>
            <person name="Ronnstrand L."/>
        </authorList>
    </citation>
    <scope>INTERACTION WITH KIT</scope>
</reference>
<reference key="12">
    <citation type="journal article" date="1999" name="Blood">
        <title>Gab-family adapter proteins act downstream of cytokine and growth factor receptors and T- and B-cell antigen receptors.</title>
        <authorList>
            <person name="Nishida K."/>
            <person name="Yoshida Y."/>
            <person name="Itoh M."/>
            <person name="Fukada T."/>
            <person name="Ohtani T."/>
            <person name="Shirogane T."/>
            <person name="Atsumi T."/>
            <person name="Takahashi-Tezuka M."/>
            <person name="Ishihara K."/>
            <person name="Hibi M."/>
            <person name="Hirano T."/>
        </authorList>
    </citation>
    <scope>INTERACTION WITH GAB2</scope>
</reference>
<reference key="13">
    <citation type="journal article" date="1999" name="J. Biol. Chem.">
        <title>Identification of Tek/Tie2 binding partners. Binding to a multifunctional docking site mediates cell survival and migration.</title>
        <authorList>
            <person name="Jones N."/>
            <person name="Master Z."/>
            <person name="Jones J."/>
            <person name="Bouchard D."/>
            <person name="Gunji Y."/>
            <person name="Sasaki H."/>
            <person name="Daly R."/>
            <person name="Alitalo K."/>
            <person name="Dumont D.J."/>
        </authorList>
    </citation>
    <scope>INTERACTION WITH TEK/TIE2</scope>
</reference>
<reference key="14">
    <citation type="journal article" date="1999" name="Mol. Cell. Biol.">
        <title>Ajuba, a novel LIM protein, interacts with Grb2, augments mitogen-activated protein kinase activity in fibroblasts, and promotes meiotic maturation of Xenopus oocytes in a Grb2- and Ras-dependent manner.</title>
        <authorList>
            <person name="Goyal R.K."/>
            <person name="Lin P."/>
            <person name="Kanungo J."/>
            <person name="Payne A.S."/>
            <person name="Muslin A.J."/>
            <person name="Longmore G.D."/>
        </authorList>
    </citation>
    <scope>INTERACTION WITH AJUBA</scope>
</reference>
<reference key="15">
    <citation type="journal article" date="2001" name="Biochemistry">
        <title>Mouse alpha1-syntrophin binding to Grb2: further evidence of a role for syntrophin in cell signaling.</title>
        <authorList>
            <person name="Oak S.A."/>
            <person name="Russo K."/>
            <person name="Petrucci T.C."/>
            <person name="Jarrett H.W."/>
        </authorList>
    </citation>
    <scope>INTERACTION WITH SNTA1</scope>
</reference>
<reference key="16">
    <citation type="journal article" date="2001" name="J. Biol. Chem.">
        <title>MIST functions through distinct domains in immunoreceptor signaling in the presence and absence of LAT.</title>
        <authorList>
            <person name="Goitsuka R."/>
            <person name="Tatsuno A."/>
            <person name="Ishiai M."/>
            <person name="Kurosaki T."/>
            <person name="Kitamura D."/>
        </authorList>
    </citation>
    <scope>INTERACTION WITH CLNK</scope>
</reference>
<reference key="17">
    <citation type="journal article" date="2001" name="J. Biol. Chem.">
        <title>PrPC directly interacts with proteins involved in signaling pathways.</title>
        <authorList>
            <person name="Spielhaupter C."/>
            <person name="Schaetzl H.M."/>
        </authorList>
    </citation>
    <scope>SUBCELLULAR LOCATION</scope>
    <scope>INTERACTION WITH PRNP</scope>
</reference>
<reference key="18">
    <citation type="journal article" date="2001" name="Mol. Cell. Biol.">
        <title>Insulin receptor substrate 3 (IRS-3) and IRS-4 impair IRS-1- and IRS-2-mediated signaling.</title>
        <authorList>
            <person name="Tsuruzoe K."/>
            <person name="Emkey R."/>
            <person name="Kriauciunas K.M."/>
            <person name="Ueki K."/>
            <person name="Kahn C.R."/>
        </authorList>
    </citation>
    <scope>INTERACTION WITH IRS4</scope>
</reference>
<reference key="19">
    <citation type="journal article" date="2002" name="J. Biol. Chem.">
        <title>'Srcasm: a novel Src activating and signaling molecule.</title>
        <authorList>
            <person name="Seykora J.T."/>
            <person name="Mei L."/>
            <person name="Dotto G.P."/>
            <person name="Stein P.L."/>
        </authorList>
    </citation>
    <scope>INTERACTION WITH TOM1L1</scope>
</reference>
<reference key="20">
    <citation type="journal article" date="2003" name="J. Cell Biol.">
        <title>EphB1 recruits c-Src and p52Shc to activate MAPK/ERK and promote chemotaxis.</title>
        <authorList>
            <person name="Vindis C."/>
            <person name="Cerretti D.P."/>
            <person name="Daniel T.O."/>
            <person name="Huynh-Do U."/>
        </authorList>
    </citation>
    <scope>INTERACTION WITH EPHB1 AND SHC1</scope>
</reference>
<reference key="21">
    <citation type="journal article" date="2003" name="J. Exp. Med.">
        <title>LIME, a novel transmembrane adaptor protein, associates with p56lck and mediates T cell activation.</title>
        <authorList>
            <person name="Hur E.M."/>
            <person name="Son M."/>
            <person name="Lee O.-H."/>
            <person name="Choi Y.B."/>
            <person name="Park C."/>
            <person name="Lee H."/>
            <person name="Yun Y."/>
        </authorList>
    </citation>
    <scope>INTERACTION WITH LIME1</scope>
</reference>
<reference key="22">
    <citation type="journal article" date="2004" name="J. Exp. Med.">
        <title>Positive and negative regulation of FcepsilonRI-mediated signaling by the adaptor protein LAB/NTAL.</title>
        <authorList>
            <person name="Zhu M."/>
            <person name="Liu Y."/>
            <person name="Koonpaew S."/>
            <person name="Granillo O."/>
            <person name="Zhang W."/>
        </authorList>
    </citation>
    <scope>INTERACTION WITH LAT2</scope>
</reference>
<reference key="23">
    <citation type="journal article" date="2004" name="J. Exp. Med.">
        <title>Negative regulation of mast cell signaling and function by the adaptor LAB/NTAL.</title>
        <authorList>
            <person name="Volna P."/>
            <person name="Lebduska P."/>
            <person name="Draberova L."/>
            <person name="Simova S."/>
            <person name="Heneberg P."/>
            <person name="Boubelik M."/>
            <person name="Bugajev V."/>
            <person name="Malissen B."/>
            <person name="Wilson B.S."/>
            <person name="Horejsi V."/>
            <person name="Malissen M."/>
            <person name="Draber P."/>
        </authorList>
    </citation>
    <scope>INTERACTION WITH LAT2</scope>
</reference>
<reference key="24">
    <citation type="journal article" date="2006" name="Blood">
        <title>LIME acts as a transmembrane adapter mediating BCR-dependent B-cell activation.</title>
        <authorList>
            <person name="Ahn E."/>
            <person name="Lee H."/>
            <person name="Yun Y."/>
        </authorList>
    </citation>
    <scope>INTERACTION WITH LIME1</scope>
</reference>
<reference key="25">
    <citation type="journal article" date="2006" name="J. Biol. Chem.">
        <title>Phosphorylation of Tyr1214 within VEGFR-2 triggers the recruitment of Nck and activation of Fyn leading to SAPK2/p38 activation and endothelial cell migration in response to VEGF.</title>
        <authorList>
            <person name="Lamalice L."/>
            <person name="Houle F."/>
            <person name="Huot J."/>
        </authorList>
    </citation>
    <scope>INTERACTION WITH KDR</scope>
</reference>
<reference key="26">
    <citation type="journal article" date="2006" name="Nat. Immunol.">
        <title>NKG2D-mediated signaling requires a DAP10-bound Grb2-Vav1 intermediate and phosphatidylinositol-3-kinase in human natural killer cells.</title>
        <authorList>
            <person name="Upshaw J.L."/>
            <person name="Arneson L.N."/>
            <person name="Schoon R.A."/>
            <person name="Dick C.J."/>
            <person name="Billadeau D.D."/>
            <person name="Leibson P.J."/>
        </authorList>
    </citation>
    <scope>INTERACTION WITH HCST</scope>
</reference>
<reference key="27">
    <citation type="journal article" date="2009" name="Nat. Immunol.">
        <title>Themis, a T cell-specific protein important for late thymocyte development.</title>
        <authorList>
            <person name="Lesourne R."/>
            <person name="Uehara S."/>
            <person name="Lee J."/>
            <person name="Song K.-D."/>
            <person name="Li L."/>
            <person name="Pinkhasov J."/>
            <person name="Zhang Y."/>
            <person name="Weng N.-P."/>
            <person name="Wildt K.F."/>
            <person name="Wang L."/>
            <person name="Bosselut R."/>
            <person name="Love P.E."/>
        </authorList>
    </citation>
    <scope>INTERACTION WITH THEMIS</scope>
</reference>
<reference key="28">
    <citation type="journal article" date="2009" name="Nat. Immunol.">
        <title>Themis is a member of a new metazoan gene family and is required for the completion of thymocyte positive selection.</title>
        <authorList>
            <person name="Johnson A.L."/>
            <person name="Aravind L."/>
            <person name="Shulzhenko N."/>
            <person name="Morgun A."/>
            <person name="Choi S.-Y."/>
            <person name="Crockford T.L."/>
            <person name="Lambe T."/>
            <person name="Domaschenz H."/>
            <person name="Kucharska E.M."/>
            <person name="Zheng L."/>
            <person name="Vinuesa C.G."/>
            <person name="Lenardo M.J."/>
            <person name="Goodnow C.C."/>
            <person name="Cornall R.J."/>
            <person name="Schwartz R.H."/>
        </authorList>
    </citation>
    <scope>INTERACTION WITH THEMIS</scope>
</reference>
<reference key="29">
    <citation type="journal article" date="2009" name="Proc. Natl. Acad. Sci. U.S.A.">
        <title>Gasp, a Grb2-associating protein, is critical for positive selection of thymocytes.</title>
        <authorList>
            <person name="Patrick M.S."/>
            <person name="Oda H."/>
            <person name="Hayakawa K."/>
            <person name="Sato Y."/>
            <person name="Eshima K."/>
            <person name="Kirikae T."/>
            <person name="Iemura S."/>
            <person name="Shirai M."/>
            <person name="Abe T."/>
            <person name="Natsume T."/>
            <person name="Sasazuki T."/>
            <person name="Suzuki H."/>
        </authorList>
    </citation>
    <scope>INTERACTION WITH THEMIS</scope>
</reference>
<reference key="30">
    <citation type="journal article" date="2010" name="Cell">
        <title>A tissue-specific atlas of mouse protein phosphorylation and expression.</title>
        <authorList>
            <person name="Huttlin E.L."/>
            <person name="Jedrychowski M.P."/>
            <person name="Elias J.E."/>
            <person name="Goswami T."/>
            <person name="Rad R."/>
            <person name="Beausoleil S.A."/>
            <person name="Villen J."/>
            <person name="Haas W."/>
            <person name="Sowa M.E."/>
            <person name="Gygi S.P."/>
        </authorList>
    </citation>
    <scope>IDENTIFICATION BY MASS SPECTROMETRY [LARGE SCALE ANALYSIS]</scope>
    <source>
        <tissue>Brain</tissue>
        <tissue>Brown adipose tissue</tissue>
        <tissue>Heart</tissue>
        <tissue>Kidney</tissue>
        <tissue>Liver</tissue>
        <tissue>Lung</tissue>
        <tissue>Pancreas</tissue>
        <tissue>Spleen</tissue>
        <tissue>Testis</tissue>
    </source>
</reference>
<reference key="31">
    <citation type="journal article" date="2010" name="Genes Cells">
        <title>Tyrosine phosphorylation of R3 subtype receptor-type protein tyrosine phosphatases and their complex formations with Grb2 or Fyn.</title>
        <authorList>
            <person name="Murata Y."/>
            <person name="Mori M."/>
            <person name="Kotani T."/>
            <person name="Supriatna Y."/>
            <person name="Okazawa H."/>
            <person name="Kusakari S."/>
            <person name="Saito Y."/>
            <person name="Ohnishi H."/>
            <person name="Matozaki T."/>
        </authorList>
    </citation>
    <scope>INTERACTION WITH PTPRH; PTPRO AND PTPRB</scope>
</reference>
<reference key="32">
    <citation type="journal article" date="2010" name="PLoS ONE">
        <title>Themis2/ICB1 is a signaling scaffold that selectively regulates macrophage Toll-like receptor signaling and cytokine production.</title>
        <authorList>
            <person name="Peirce M.J."/>
            <person name="Brook M."/>
            <person name="Morrice N."/>
            <person name="Snelgrove R."/>
            <person name="Begum S."/>
            <person name="Lanfrancotti A."/>
            <person name="Notley C."/>
            <person name="Hussell T."/>
            <person name="Cope A.P."/>
            <person name="Wait R."/>
        </authorList>
    </citation>
    <scope>INTERACTION WITH THEMIS2</scope>
</reference>
<reference key="33">
    <citation type="journal article" date="2011" name="J. Biol. Chem.">
        <title>Rab13-dependent trafficking of RhoA is required for directional migration and angiogenesis.</title>
        <authorList>
            <person name="Wu C."/>
            <person name="Agrawal S."/>
            <person name="Vasanji A."/>
            <person name="Drazba J."/>
            <person name="Sarkaria S."/>
            <person name="Xie J."/>
            <person name="Welch C.M."/>
            <person name="Liu M."/>
            <person name="Anand-Apte B."/>
            <person name="Horowitz A."/>
        </authorList>
    </citation>
    <scope>INTERACTION WITH RAB13</scope>
</reference>
<reference key="34">
    <citation type="journal article" date="2011" name="Mol. Cell. Biol.">
        <title>SCIMP, a transmembrane adapter protein involved in major histocompatibility complex class II signaling.</title>
        <authorList>
            <person name="Draber P."/>
            <person name="Vonkova I."/>
            <person name="Stepanek O."/>
            <person name="Hrdinka M."/>
            <person name="Kucova M."/>
            <person name="Skopcova T."/>
            <person name="Otahal P."/>
            <person name="Angelisova P."/>
            <person name="Horejsi V."/>
            <person name="Yeung M."/>
            <person name="Weiss A."/>
            <person name="Brdicka T."/>
        </authorList>
    </citation>
    <scope>INTERACTION WITH SCIMP</scope>
</reference>
<reference key="35">
    <citation type="journal article" date="2012" name="Nat. Immunol.">
        <title>Tespa1 is involved in late thymocyte development through the regulation of TCR-mediated signaling.</title>
        <authorList>
            <person name="Wang D."/>
            <person name="Zheng M."/>
            <person name="Lei L."/>
            <person name="Ji J."/>
            <person name="Yao Y."/>
            <person name="Qiu Y."/>
            <person name="Ma L."/>
            <person name="Lou J."/>
            <person name="Ouyang C."/>
            <person name="Zhang X."/>
            <person name="He Y."/>
            <person name="Chi J."/>
            <person name="Wang L."/>
            <person name="Kuang Y."/>
            <person name="Wang J."/>
            <person name="Cao X."/>
            <person name="Lu L."/>
        </authorList>
    </citation>
    <scope>INTERACTION WITH LAT; PLCG1 AND THEMIS</scope>
    <source>
        <tissue>Thymocyte</tissue>
    </source>
</reference>
<reference key="36">
    <citation type="journal article" date="2015" name="J. Exp. Med.">
        <title>DNAM-1 controls NK cell activation via an ITT-like motif.</title>
        <authorList>
            <person name="Zhang Z."/>
            <person name="Wu N."/>
            <person name="Lu Y."/>
            <person name="Davidson D."/>
            <person name="Colonna M."/>
            <person name="Veillette A."/>
        </authorList>
    </citation>
    <scope>INTERACTION WITH CD226</scope>
</reference>
<reference key="37">
    <citation type="journal article" date="2017" name="Immunol. Cell Biol.">
        <title>Development of SH2 probes and pull-down assays to detect pathogen-induced, site-specific tyrosine phosphorylation of the TLR adaptor SCIMP.</title>
        <authorList>
            <person name="Luo L."/>
            <person name="Tong S.J."/>
            <person name="Wall A.A."/>
            <person name="Khromykh T."/>
            <person name="Sweet M.J."/>
            <person name="Stow J.L."/>
        </authorList>
    </citation>
    <scope>INTERACTION WITH SCIMP</scope>
</reference>
<reference key="38">
    <citation type="journal article" date="2017" name="Biochim. Biophys. Acta">
        <title>Grb2 regulates the proliferation of hematopoietic stem and progenitors cells.</title>
        <authorList>
            <person name="Frelin C."/>
            <person name="Ofran Y."/>
            <person name="Ruston J."/>
            <person name="Hayun M."/>
            <person name="Derdikman Y."/>
            <person name="Khier Y."/>
            <person name="Rozales K."/>
            <person name="Brenner B."/>
            <person name="Iscove N."/>
            <person name="Pawson T."/>
            <person name="Louria-Hayon I."/>
        </authorList>
    </citation>
    <scope>DISRUPTION PHENOTYPE</scope>
    <scope>FUNCTION</scope>
</reference>
<reference key="39">
    <citation type="journal article" date="2017" name="Nat. Commun.">
        <title>SCIMP is a transmembrane non-TIR TLR adaptor that promotes proinflammatory cytokine production from macrophages.</title>
        <authorList>
            <person name="Luo L."/>
            <person name="Bokil N.J."/>
            <person name="Wall A.A."/>
            <person name="Kapetanovic R."/>
            <person name="Lansdaal N.M."/>
            <person name="Marceline F."/>
            <person name="Burgess B.J."/>
            <person name="Tong S.J."/>
            <person name="Guo Z."/>
            <person name="Alexandrov K."/>
            <person name="Ross I.L."/>
            <person name="Hibbs M.L."/>
            <person name="Stow J.L."/>
            <person name="Sweet M.J."/>
        </authorList>
    </citation>
    <scope>IDENTIFICATION BY MASS SPECTROMETRY</scope>
    <scope>INTERACTION WITH SCIMP</scope>
    <scope>TISSUE SPECIFICITY</scope>
</reference>
<reference key="40">
    <citation type="journal article" date="2020" name="Elife">
        <title>SWELL1 regulates skeletal muscle cell size, intracellular signaling, adiposity and glucose metabolism.</title>
        <authorList>
            <person name="Kumar A."/>
            <person name="Xie L."/>
            <person name="Ta C.M."/>
            <person name="Hinton A.O."/>
            <person name="Gunasekar S.K."/>
            <person name="Minerath R.A."/>
            <person name="Shen K."/>
            <person name="Maurer J.M."/>
            <person name="Grueter C.E."/>
            <person name="Abel E.D."/>
            <person name="Meyer G."/>
            <person name="Sah R."/>
        </authorList>
    </citation>
    <scope>INTERACTION WITH LRRC8A</scope>
</reference>
<reference key="41">
    <citation type="journal article" date="2021" name="J. Immunol.">
        <title>FCRL1 Regulates B Cell Receptor-Induced ERK Activation through GRB2.</title>
        <authorList>
            <person name="DeLuca J.M."/>
            <person name="Murphy M.K."/>
            <person name="Wang X."/>
            <person name="Wilson T.J."/>
        </authorList>
    </citation>
    <scope>FUNCTION</scope>
    <scope>INTERACTION WITH FCRL1</scope>
</reference>
<reference key="42">
    <citation type="journal article" date="1997" name="J. Mol. Biol.">
        <title>Solution structure of the Grb2 N-terminal SH3 domain complexed with a ten-residue peptide derived from SOS: direct refinement against NOEs, J-couplings and 1H and 13C chemical shifts.</title>
        <authorList>
            <person name="Wittekind M."/>
            <person name="Mapelli C."/>
            <person name="Lee V."/>
            <person name="Goldfarb V."/>
            <person name="Friedrichs M.S."/>
            <person name="Meyers C.A."/>
            <person name="Mueller L."/>
        </authorList>
    </citation>
    <scope>STRUCTURE BY NMR OF 1-65</scope>
</reference>
<keyword id="KW-0002">3D-structure</keyword>
<keyword id="KW-0007">Acetylation</keyword>
<keyword id="KW-0025">Alternative splicing</keyword>
<keyword id="KW-0963">Cytoplasm</keyword>
<keyword id="KW-0903">Direct protein sequencing</keyword>
<keyword id="KW-0967">Endosome</keyword>
<keyword id="KW-0333">Golgi apparatus</keyword>
<keyword id="KW-1017">Isopeptide bond</keyword>
<keyword id="KW-0539">Nucleus</keyword>
<keyword id="KW-0597">Phosphoprotein</keyword>
<keyword id="KW-1185">Reference proteome</keyword>
<keyword id="KW-0677">Repeat</keyword>
<keyword id="KW-0727">SH2 domain</keyword>
<keyword id="KW-0728">SH3 domain</keyword>
<keyword id="KW-0832">Ubl conjugation</keyword>
<organism>
    <name type="scientific">Mus musculus</name>
    <name type="common">Mouse</name>
    <dbReference type="NCBI Taxonomy" id="10090"/>
    <lineage>
        <taxon>Eukaryota</taxon>
        <taxon>Metazoa</taxon>
        <taxon>Chordata</taxon>
        <taxon>Craniata</taxon>
        <taxon>Vertebrata</taxon>
        <taxon>Euteleostomi</taxon>
        <taxon>Mammalia</taxon>
        <taxon>Eutheria</taxon>
        <taxon>Euarchontoglires</taxon>
        <taxon>Glires</taxon>
        <taxon>Rodentia</taxon>
        <taxon>Myomorpha</taxon>
        <taxon>Muroidea</taxon>
        <taxon>Muridae</taxon>
        <taxon>Murinae</taxon>
        <taxon>Mus</taxon>
        <taxon>Mus</taxon>
    </lineage>
</organism>
<accession>Q60631</accession>
<accession>Q61240</accession>
<feature type="chain" id="PRO_0000088199" description="Growth factor receptor-bound protein 2">
    <location>
        <begin position="1"/>
        <end position="217"/>
    </location>
</feature>
<feature type="domain" description="SH3 1" evidence="4">
    <location>
        <begin position="1"/>
        <end position="58"/>
    </location>
</feature>
<feature type="domain" description="SH2" evidence="3">
    <location>
        <begin position="60"/>
        <end position="152"/>
    </location>
</feature>
<feature type="domain" description="SH3 2" evidence="4">
    <location>
        <begin position="156"/>
        <end position="215"/>
    </location>
</feature>
<feature type="modified residue" description="N-acetylmethionine" evidence="2">
    <location>
        <position position="1"/>
    </location>
</feature>
<feature type="modified residue" description="N6-acetyllysine" evidence="2">
    <location>
        <position position="6"/>
    </location>
</feature>
<feature type="modified residue" description="N6-acetyllysine" evidence="2">
    <location>
        <position position="50"/>
    </location>
</feature>
<feature type="modified residue" description="N6-acetyllysine" evidence="2">
    <location>
        <position position="109"/>
    </location>
</feature>
<feature type="modified residue" description="Phosphotyrosine" evidence="2">
    <location>
        <position position="209"/>
    </location>
</feature>
<feature type="modified residue" description="Phosphothreonine" evidence="2">
    <location>
        <position position="211"/>
    </location>
</feature>
<feature type="cross-link" description="Glycyl lysine isopeptide (Lys-Gly) (interchain with G-Cter in ubiquitin)" evidence="2">
    <location>
        <position position="109"/>
    </location>
</feature>
<feature type="splice variant" id="VSP_001841" description="In isoform 2." evidence="41">
    <location>
        <begin position="60"/>
        <end position="100"/>
    </location>
</feature>
<feature type="strand" evidence="43">
    <location>
        <begin position="2"/>
        <end position="7"/>
    </location>
</feature>
<feature type="strand" evidence="44">
    <location>
        <begin position="13"/>
        <end position="16"/>
    </location>
</feature>
<feature type="strand" evidence="43">
    <location>
        <begin position="24"/>
        <end position="26"/>
    </location>
</feature>
<feature type="strand" evidence="43">
    <location>
        <begin position="34"/>
        <end position="41"/>
    </location>
</feature>
<feature type="strand" evidence="43">
    <location>
        <begin position="44"/>
        <end position="49"/>
    </location>
</feature>
<feature type="helix" evidence="43">
    <location>
        <begin position="50"/>
        <end position="52"/>
    </location>
</feature>
<feature type="strand" evidence="43">
    <location>
        <begin position="53"/>
        <end position="56"/>
    </location>
</feature>
<dbReference type="EMBL" id="U07617">
    <property type="protein sequence ID" value="AAB40022.1"/>
    <property type="molecule type" value="mRNA"/>
</dbReference>
<dbReference type="EMBL" id="D85748">
    <property type="protein sequence ID" value="BAA12862.1"/>
    <property type="molecule type" value="mRNA"/>
</dbReference>
<dbReference type="EMBL" id="BC052377">
    <property type="protein sequence ID" value="AAH52377.1"/>
    <property type="molecule type" value="mRNA"/>
</dbReference>
<dbReference type="EMBL" id="BC085254">
    <property type="protein sequence ID" value="AAH85254.1"/>
    <property type="molecule type" value="mRNA"/>
</dbReference>
<dbReference type="CCDS" id="CCDS25645.1">
    <molecule id="Q60631-1"/>
</dbReference>
<dbReference type="PIR" id="A54688">
    <property type="entry name" value="A54688"/>
</dbReference>
<dbReference type="RefSeq" id="NP_001300865.1">
    <molecule id="Q60631-1"/>
    <property type="nucleotide sequence ID" value="NM_001313936.1"/>
</dbReference>
<dbReference type="RefSeq" id="NP_001300866.1">
    <molecule id="Q60631-1"/>
    <property type="nucleotide sequence ID" value="NM_001313937.1"/>
</dbReference>
<dbReference type="RefSeq" id="NP_032189.1">
    <molecule id="Q60631-1"/>
    <property type="nucleotide sequence ID" value="NM_008163.4"/>
</dbReference>
<dbReference type="PDB" id="1GBQ">
    <property type="method" value="NMR"/>
    <property type="chains" value="A=1-61"/>
</dbReference>
<dbReference type="PDB" id="1GBR">
    <property type="method" value="NMR"/>
    <property type="chains" value="A=1-59"/>
</dbReference>
<dbReference type="PDB" id="2GBQ">
    <property type="method" value="NMR"/>
    <property type="chains" value="A=1-59"/>
</dbReference>
<dbReference type="PDB" id="3GBQ">
    <property type="method" value="NMR"/>
    <property type="chains" value="A=1-59"/>
</dbReference>
<dbReference type="PDB" id="4GBQ">
    <property type="method" value="NMR"/>
    <property type="chains" value="A=1-59"/>
</dbReference>
<dbReference type="PDBsum" id="1GBQ"/>
<dbReference type="PDBsum" id="1GBR"/>
<dbReference type="PDBsum" id="2GBQ"/>
<dbReference type="PDBsum" id="3GBQ"/>
<dbReference type="PDBsum" id="4GBQ"/>
<dbReference type="SMR" id="Q60631"/>
<dbReference type="BioGRID" id="200046">
    <property type="interactions" value="104"/>
</dbReference>
<dbReference type="CORUM" id="Q60631"/>
<dbReference type="DIP" id="DIP-259N"/>
<dbReference type="FunCoup" id="Q60631">
    <property type="interactions" value="4461"/>
</dbReference>
<dbReference type="IntAct" id="Q60631">
    <property type="interactions" value="77"/>
</dbReference>
<dbReference type="MINT" id="Q60631"/>
<dbReference type="STRING" id="10090.ENSMUSP00000021090"/>
<dbReference type="BindingDB" id="Q60631"/>
<dbReference type="ChEMBL" id="CHEMBL4830"/>
<dbReference type="DrugCentral" id="Q60631"/>
<dbReference type="GlyGen" id="Q60631">
    <property type="glycosylation" value="1 site"/>
</dbReference>
<dbReference type="iPTMnet" id="Q60631"/>
<dbReference type="PhosphoSitePlus" id="Q60631"/>
<dbReference type="SwissPalm" id="Q60631"/>
<dbReference type="jPOST" id="Q60631"/>
<dbReference type="PaxDb" id="10090-ENSMUSP00000021090"/>
<dbReference type="PeptideAtlas" id="Q60631"/>
<dbReference type="ProteomicsDB" id="271325">
    <molecule id="Q60631-1"/>
</dbReference>
<dbReference type="ProteomicsDB" id="271326">
    <molecule id="Q60631-2"/>
</dbReference>
<dbReference type="Pumba" id="Q60631"/>
<dbReference type="Antibodypedia" id="3408">
    <property type="antibodies" value="698 antibodies from 44 providers"/>
</dbReference>
<dbReference type="DNASU" id="14784"/>
<dbReference type="Ensembl" id="ENSMUST00000021090.14">
    <molecule id="Q60631-1"/>
    <property type="protein sequence ID" value="ENSMUSP00000021090.8"/>
    <property type="gene ID" value="ENSMUSG00000059923.14"/>
</dbReference>
<dbReference type="Ensembl" id="ENSMUST00000106497.8">
    <molecule id="Q60631-1"/>
    <property type="protein sequence ID" value="ENSMUSP00000102106.2"/>
    <property type="gene ID" value="ENSMUSG00000059923.14"/>
</dbReference>
<dbReference type="Ensembl" id="ENSMUST00000106499.8">
    <molecule id="Q60631-2"/>
    <property type="protein sequence ID" value="ENSMUSP00000102108.2"/>
    <property type="gene ID" value="ENSMUSG00000059923.14"/>
</dbReference>
<dbReference type="GeneID" id="14784"/>
<dbReference type="KEGG" id="mmu:14784"/>
<dbReference type="UCSC" id="uc007mii.1">
    <molecule id="Q60631-2"/>
    <property type="organism name" value="mouse"/>
</dbReference>
<dbReference type="UCSC" id="uc007mij.1">
    <molecule id="Q60631-1"/>
    <property type="organism name" value="mouse"/>
</dbReference>
<dbReference type="AGR" id="MGI:95805"/>
<dbReference type="CTD" id="2885"/>
<dbReference type="MGI" id="MGI:95805">
    <property type="gene designation" value="Grb2"/>
</dbReference>
<dbReference type="VEuPathDB" id="HostDB:ENSMUSG00000059923"/>
<dbReference type="eggNOG" id="KOG3601">
    <property type="taxonomic scope" value="Eukaryota"/>
</dbReference>
<dbReference type="GeneTree" id="ENSGT00940000155738"/>
<dbReference type="InParanoid" id="Q60631"/>
<dbReference type="OMA" id="YVCPYNS"/>
<dbReference type="OrthoDB" id="10255964at2759"/>
<dbReference type="PhylomeDB" id="Q60631"/>
<dbReference type="TreeFam" id="TF354288"/>
<dbReference type="Reactome" id="R-MMU-109704">
    <molecule id="Q60631-1"/>
    <property type="pathway name" value="PI3K Cascade"/>
</dbReference>
<dbReference type="Reactome" id="R-MMU-112412">
    <molecule id="Q60631-1"/>
    <property type="pathway name" value="SOS-mediated signalling"/>
</dbReference>
<dbReference type="Reactome" id="R-MMU-1250347">
    <molecule id="Q60631-1"/>
    <property type="pathway name" value="SHC1 events in ERBB4 signaling"/>
</dbReference>
<dbReference type="Reactome" id="R-MMU-1257604">
    <molecule id="Q60631-1"/>
    <property type="pathway name" value="PIP3 activates AKT signaling"/>
</dbReference>
<dbReference type="Reactome" id="R-MMU-1295596">
    <molecule id="Q60631-1"/>
    <property type="pathway name" value="Spry regulation of FGF signaling"/>
</dbReference>
<dbReference type="Reactome" id="R-MMU-1433557">
    <molecule id="Q60631-1"/>
    <property type="pathway name" value="Signaling by SCF-KIT"/>
</dbReference>
<dbReference type="Reactome" id="R-MMU-1433559">
    <molecule id="Q60631-1"/>
    <property type="pathway name" value="Regulation of KIT signaling"/>
</dbReference>
<dbReference type="Reactome" id="R-MMU-167044">
    <molecule id="Q60631-1"/>
    <property type="pathway name" value="Signalling to RAS"/>
</dbReference>
<dbReference type="Reactome" id="R-MMU-179812">
    <molecule id="Q60631-1"/>
    <property type="pathway name" value="GRB2 events in EGFR signaling"/>
</dbReference>
<dbReference type="Reactome" id="R-MMU-180292">
    <molecule id="Q60631-1"/>
    <property type="pathway name" value="GAB1 signalosome"/>
</dbReference>
<dbReference type="Reactome" id="R-MMU-180336">
    <molecule id="Q60631-1"/>
    <property type="pathway name" value="SHC1 events in EGFR signaling"/>
</dbReference>
<dbReference type="Reactome" id="R-MMU-182971">
    <molecule id="Q60631-1"/>
    <property type="pathway name" value="EGFR downregulation"/>
</dbReference>
<dbReference type="Reactome" id="R-MMU-186763">
    <molecule id="Q60631-1"/>
    <property type="pathway name" value="Downstream signal transduction"/>
</dbReference>
<dbReference type="Reactome" id="R-MMU-1963640">
    <molecule id="Q60631-1"/>
    <property type="pathway name" value="GRB2 events in ERBB2 signaling"/>
</dbReference>
<dbReference type="Reactome" id="R-MMU-1963642">
    <molecule id="Q60631-1"/>
    <property type="pathway name" value="PI3K events in ERBB2 signaling"/>
</dbReference>
<dbReference type="Reactome" id="R-MMU-2029482">
    <molecule id="Q60631-1"/>
    <property type="pathway name" value="Regulation of actin dynamics for phagocytic cup formation"/>
</dbReference>
<dbReference type="Reactome" id="R-MMU-210993">
    <molecule id="Q60631-1"/>
    <property type="pathway name" value="Tie2 Signaling"/>
</dbReference>
<dbReference type="Reactome" id="R-MMU-2179392">
    <molecule id="Q60631-1"/>
    <property type="pathway name" value="EGFR Transactivation by Gastrin"/>
</dbReference>
<dbReference type="Reactome" id="R-MMU-2424491">
    <molecule id="Q60631-1"/>
    <property type="pathway name" value="DAP12 signaling"/>
</dbReference>
<dbReference type="Reactome" id="R-MMU-2428933">
    <molecule id="Q60631-1"/>
    <property type="pathway name" value="SHC-related events triggered by IGF1R"/>
</dbReference>
<dbReference type="Reactome" id="R-MMU-2730905">
    <molecule id="Q60631-1"/>
    <property type="pathway name" value="Role of LAT2/NTAL/LAB on calcium mobilization"/>
</dbReference>
<dbReference type="Reactome" id="R-MMU-2871796">
    <molecule id="Q60631-1"/>
    <property type="pathway name" value="FCERI mediated MAPK activation"/>
</dbReference>
<dbReference type="Reactome" id="R-MMU-2871809">
    <molecule id="Q60631-1"/>
    <property type="pathway name" value="FCERI mediated Ca+2 mobilization"/>
</dbReference>
<dbReference type="Reactome" id="R-MMU-354194">
    <molecule id="Q60631-1"/>
    <property type="pathway name" value="GRB2:SOS provides linkage to MAPK signaling for Integrins"/>
</dbReference>
<dbReference type="Reactome" id="R-MMU-375165">
    <molecule id="Q60631-1"/>
    <property type="pathway name" value="NCAM signaling for neurite out-growth"/>
</dbReference>
<dbReference type="Reactome" id="R-MMU-389359">
    <molecule id="Q60631-1"/>
    <property type="pathway name" value="CD28 dependent Vav1 pathway"/>
</dbReference>
<dbReference type="Reactome" id="R-MMU-391160">
    <molecule id="Q60631-1"/>
    <property type="pathway name" value="Signal regulatory protein family interactions"/>
</dbReference>
<dbReference type="Reactome" id="R-MMU-5654688">
    <molecule id="Q60631-1"/>
    <property type="pathway name" value="SHC-mediated cascade:FGFR1"/>
</dbReference>
<dbReference type="Reactome" id="R-MMU-5654689">
    <molecule id="Q60631-1"/>
    <property type="pathway name" value="PI-3K cascade:FGFR1"/>
</dbReference>
<dbReference type="Reactome" id="R-MMU-5654693">
    <molecule id="Q60631-1"/>
    <property type="pathway name" value="FRS-mediated FGFR1 signaling"/>
</dbReference>
<dbReference type="Reactome" id="R-MMU-5654695">
    <molecule id="Q60631-1"/>
    <property type="pathway name" value="PI-3K cascade:FGFR2"/>
</dbReference>
<dbReference type="Reactome" id="R-MMU-5654699">
    <molecule id="Q60631-1"/>
    <property type="pathway name" value="SHC-mediated cascade:FGFR2"/>
</dbReference>
<dbReference type="Reactome" id="R-MMU-5654700">
    <molecule id="Q60631-1"/>
    <property type="pathway name" value="FRS-mediated FGFR2 signaling"/>
</dbReference>
<dbReference type="Reactome" id="R-MMU-5654704">
    <molecule id="Q60631-1"/>
    <property type="pathway name" value="SHC-mediated cascade:FGFR3"/>
</dbReference>
<dbReference type="Reactome" id="R-MMU-5654706">
    <molecule id="Q60631-1"/>
    <property type="pathway name" value="FRS-mediated FGFR3 signaling"/>
</dbReference>
<dbReference type="Reactome" id="R-MMU-5654710">
    <molecule id="Q60631-1"/>
    <property type="pathway name" value="PI-3K cascade:FGFR3"/>
</dbReference>
<dbReference type="Reactome" id="R-MMU-5654712">
    <molecule id="Q60631-1"/>
    <property type="pathway name" value="FRS-mediated FGFR4 signaling"/>
</dbReference>
<dbReference type="Reactome" id="R-MMU-5654719">
    <molecule id="Q60631-1"/>
    <property type="pathway name" value="SHC-mediated cascade:FGFR4"/>
</dbReference>
<dbReference type="Reactome" id="R-MMU-5654720">
    <molecule id="Q60631-1"/>
    <property type="pathway name" value="PI-3K cascade:FGFR4"/>
</dbReference>
<dbReference type="Reactome" id="R-MMU-5654726">
    <molecule id="Q60631-1"/>
    <property type="pathway name" value="Negative regulation of FGFR1 signaling"/>
</dbReference>
<dbReference type="Reactome" id="R-MMU-5654727">
    <molecule id="Q60631-1"/>
    <property type="pathway name" value="Negative regulation of FGFR2 signaling"/>
</dbReference>
<dbReference type="Reactome" id="R-MMU-5654732">
    <molecule id="Q60631-1"/>
    <property type="pathway name" value="Negative regulation of FGFR3 signaling"/>
</dbReference>
<dbReference type="Reactome" id="R-MMU-5654733">
    <molecule id="Q60631-1"/>
    <property type="pathway name" value="Negative regulation of FGFR4 signaling"/>
</dbReference>
<dbReference type="Reactome" id="R-MMU-5663213">
    <molecule id="Q60631-1"/>
    <property type="pathway name" value="RHO GTPases Activate WASPs and WAVEs"/>
</dbReference>
<dbReference type="Reactome" id="R-MMU-5673001">
    <molecule id="Q60631-1"/>
    <property type="pathway name" value="RAF/MAP kinase cascade"/>
</dbReference>
<dbReference type="Reactome" id="R-MMU-6807004">
    <molecule id="Q60631-1"/>
    <property type="pathway name" value="Negative regulation of MET activity"/>
</dbReference>
<dbReference type="Reactome" id="R-MMU-6811558">
    <molecule id="Q60631-1"/>
    <property type="pathway name" value="PI5P, PP2A and IER3 Regulate PI3K/AKT Signaling"/>
</dbReference>
<dbReference type="Reactome" id="R-MMU-74749">
    <molecule id="Q60631-1"/>
    <property type="pathway name" value="Signal attenuation"/>
</dbReference>
<dbReference type="Reactome" id="R-MMU-74751">
    <molecule id="Q60631-1"/>
    <property type="pathway name" value="Insulin receptor signalling cascade"/>
</dbReference>
<dbReference type="Reactome" id="R-MMU-8851805">
    <molecule id="Q60631-1"/>
    <property type="pathway name" value="MET activates RAS signaling"/>
</dbReference>
<dbReference type="Reactome" id="R-MMU-8851907">
    <molecule id="Q60631-1"/>
    <property type="pathway name" value="MET activates PI3K/AKT signaling"/>
</dbReference>
<dbReference type="Reactome" id="R-MMU-8853659">
    <molecule id="Q60631-1"/>
    <property type="pathway name" value="RET signaling"/>
</dbReference>
<dbReference type="Reactome" id="R-MMU-8856825">
    <molecule id="Q60631-1"/>
    <property type="pathway name" value="Cargo recognition for clathrin-mediated endocytosis"/>
</dbReference>
<dbReference type="Reactome" id="R-MMU-8856828">
    <molecule id="Q60631-1"/>
    <property type="pathway name" value="Clathrin-mediated endocytosis"/>
</dbReference>
<dbReference type="Reactome" id="R-MMU-8865999">
    <molecule id="Q60631-1"/>
    <property type="pathway name" value="MET activates PTPN11"/>
</dbReference>
<dbReference type="Reactome" id="R-MMU-8875555">
    <molecule id="Q60631-1"/>
    <property type="pathway name" value="MET activates RAP1 and RAC1"/>
</dbReference>
<dbReference type="Reactome" id="R-MMU-8875656">
    <molecule id="Q60631-1"/>
    <property type="pathway name" value="MET receptor recycling"/>
</dbReference>
<dbReference type="Reactome" id="R-MMU-8983432">
    <molecule id="Q60631-1"/>
    <property type="pathway name" value="Interleukin-15 signaling"/>
</dbReference>
<dbReference type="Reactome" id="R-MMU-9013420">
    <molecule id="Q60631-1"/>
    <property type="pathway name" value="RHOU GTPase cycle"/>
</dbReference>
<dbReference type="Reactome" id="R-MMU-9027284">
    <molecule id="Q60631-1"/>
    <property type="pathway name" value="Erythropoietin activates RAS"/>
</dbReference>
<dbReference type="Reactome" id="R-MMU-9028731">
    <molecule id="Q60631-1"/>
    <property type="pathway name" value="Activated NTRK2 signals through FRS2 and FRS3"/>
</dbReference>
<dbReference type="Reactome" id="R-MMU-912526">
    <molecule id="Q60631-1"/>
    <property type="pathway name" value="Interleukin receptor SHC signaling"/>
</dbReference>
<dbReference type="Reactome" id="R-MMU-912631">
    <molecule id="Q60631-1"/>
    <property type="pathway name" value="Regulation of signaling by CBL"/>
</dbReference>
<dbReference type="Reactome" id="R-MMU-9607240">
    <molecule id="Q60631-1"/>
    <property type="pathway name" value="FLT3 Signaling"/>
</dbReference>
<dbReference type="Reactome" id="R-MMU-9674555">
    <molecule id="Q60631-1"/>
    <property type="pathway name" value="Signaling by CSF3 (G-CSF)"/>
</dbReference>
<dbReference type="Reactome" id="R-MMU-983695">
    <molecule id="Q60631-1"/>
    <property type="pathway name" value="Antigen activates B Cell Receptor (BCR) leading to generation of second messengers"/>
</dbReference>
<dbReference type="Reactome" id="R-MMU-9842663">
    <molecule id="Q60631-1"/>
    <property type="pathway name" value="Signaling by LTK"/>
</dbReference>
<dbReference type="Reactome" id="R-MMU-9927353">
    <molecule id="Q60631-1"/>
    <property type="pathway name" value="Co-inhibition by BTLA"/>
</dbReference>
<dbReference type="BioGRID-ORCS" id="14784">
    <property type="hits" value="18 hits in 76 CRISPR screens"/>
</dbReference>
<dbReference type="ChiTaRS" id="Grb2">
    <property type="organism name" value="mouse"/>
</dbReference>
<dbReference type="EvolutionaryTrace" id="Q60631"/>
<dbReference type="PRO" id="PR:Q60631"/>
<dbReference type="Proteomes" id="UP000000589">
    <property type="component" value="Chromosome 11"/>
</dbReference>
<dbReference type="RNAct" id="Q60631">
    <property type="molecule type" value="protein"/>
</dbReference>
<dbReference type="Bgee" id="ENSMUSG00000059923">
    <property type="expression patterns" value="Expressed in ectoplacental cone and 276 other cell types or tissues"/>
</dbReference>
<dbReference type="ExpressionAtlas" id="Q60631">
    <property type="expression patterns" value="baseline and differential"/>
</dbReference>
<dbReference type="GO" id="GO:0005938">
    <property type="term" value="C:cell cortex"/>
    <property type="evidence" value="ECO:0000316"/>
    <property type="project" value="MGI"/>
</dbReference>
<dbReference type="GO" id="GO:0005911">
    <property type="term" value="C:cell-cell junction"/>
    <property type="evidence" value="ECO:0000314"/>
    <property type="project" value="MGI"/>
</dbReference>
<dbReference type="GO" id="GO:0005813">
    <property type="term" value="C:centrosome"/>
    <property type="evidence" value="ECO:0007669"/>
    <property type="project" value="Ensembl"/>
</dbReference>
<dbReference type="GO" id="GO:0008180">
    <property type="term" value="C:COP9 signalosome"/>
    <property type="evidence" value="ECO:0000314"/>
    <property type="project" value="UniProtKB"/>
</dbReference>
<dbReference type="GO" id="GO:0005737">
    <property type="term" value="C:cytoplasm"/>
    <property type="evidence" value="ECO:0000314"/>
    <property type="project" value="MGI"/>
</dbReference>
<dbReference type="GO" id="GO:0005829">
    <property type="term" value="C:cytosol"/>
    <property type="evidence" value="ECO:0000304"/>
    <property type="project" value="Reactome"/>
</dbReference>
<dbReference type="GO" id="GO:0005768">
    <property type="term" value="C:endosome"/>
    <property type="evidence" value="ECO:0000250"/>
    <property type="project" value="UniProtKB"/>
</dbReference>
<dbReference type="GO" id="GO:0005794">
    <property type="term" value="C:Golgi apparatus"/>
    <property type="evidence" value="ECO:0007669"/>
    <property type="project" value="UniProtKB-SubCell"/>
</dbReference>
<dbReference type="GO" id="GO:0070436">
    <property type="term" value="C:Grb2-EGFR complex"/>
    <property type="evidence" value="ECO:0007669"/>
    <property type="project" value="Ensembl"/>
</dbReference>
<dbReference type="GO" id="GO:0016020">
    <property type="term" value="C:membrane"/>
    <property type="evidence" value="ECO:0000314"/>
    <property type="project" value="MGI"/>
</dbReference>
<dbReference type="GO" id="GO:0005634">
    <property type="term" value="C:nucleus"/>
    <property type="evidence" value="ECO:0000250"/>
    <property type="project" value="UniProtKB"/>
</dbReference>
<dbReference type="GO" id="GO:0005886">
    <property type="term" value="C:plasma membrane"/>
    <property type="evidence" value="ECO:0000314"/>
    <property type="project" value="MGI"/>
</dbReference>
<dbReference type="GO" id="GO:0012506">
    <property type="term" value="C:vesicle membrane"/>
    <property type="evidence" value="ECO:0000314"/>
    <property type="project" value="MGI"/>
</dbReference>
<dbReference type="GO" id="GO:0046875">
    <property type="term" value="F:ephrin receptor binding"/>
    <property type="evidence" value="ECO:0000353"/>
    <property type="project" value="UniProtKB"/>
</dbReference>
<dbReference type="GO" id="GO:0005154">
    <property type="term" value="F:epidermal growth factor receptor binding"/>
    <property type="evidence" value="ECO:0007669"/>
    <property type="project" value="Ensembl"/>
</dbReference>
<dbReference type="GO" id="GO:0005091">
    <property type="term" value="F:guanyl-nucleotide exchange factor adaptor activity"/>
    <property type="evidence" value="ECO:0000314"/>
    <property type="project" value="MGI"/>
</dbReference>
<dbReference type="GO" id="GO:0042802">
    <property type="term" value="F:identical protein binding"/>
    <property type="evidence" value="ECO:0007669"/>
    <property type="project" value="Ensembl"/>
</dbReference>
<dbReference type="GO" id="GO:0043560">
    <property type="term" value="F:insulin receptor substrate binding"/>
    <property type="evidence" value="ECO:0007669"/>
    <property type="project" value="Ensembl"/>
</dbReference>
<dbReference type="GO" id="GO:0060090">
    <property type="term" value="F:molecular adaptor activity"/>
    <property type="evidence" value="ECO:0000266"/>
    <property type="project" value="MGI"/>
</dbReference>
<dbReference type="GO" id="GO:0005168">
    <property type="term" value="F:neurotrophin TRKA receptor binding"/>
    <property type="evidence" value="ECO:0007669"/>
    <property type="project" value="Ensembl"/>
</dbReference>
<dbReference type="GO" id="GO:0001784">
    <property type="term" value="F:phosphotyrosine residue binding"/>
    <property type="evidence" value="ECO:0007669"/>
    <property type="project" value="Ensembl"/>
</dbReference>
<dbReference type="GO" id="GO:0019904">
    <property type="term" value="F:protein domain specific binding"/>
    <property type="evidence" value="ECO:0000353"/>
    <property type="project" value="MGI"/>
</dbReference>
<dbReference type="GO" id="GO:0019903">
    <property type="term" value="F:protein phosphatase binding"/>
    <property type="evidence" value="ECO:0000353"/>
    <property type="project" value="UniProtKB"/>
</dbReference>
<dbReference type="GO" id="GO:0030674">
    <property type="term" value="F:protein-macromolecule adaptor activity"/>
    <property type="evidence" value="ECO:0000314"/>
    <property type="project" value="MGI"/>
</dbReference>
<dbReference type="GO" id="GO:0017124">
    <property type="term" value="F:SH3 domain binding"/>
    <property type="evidence" value="ECO:0000250"/>
    <property type="project" value="UniProtKB"/>
</dbReference>
<dbReference type="GO" id="GO:0005068">
    <property type="term" value="F:transmembrane receptor protein tyrosine kinase adaptor activity"/>
    <property type="evidence" value="ECO:0000316"/>
    <property type="project" value="MGI"/>
</dbReference>
<dbReference type="GO" id="GO:0030036">
    <property type="term" value="P:actin cytoskeleton organization"/>
    <property type="evidence" value="ECO:0007669"/>
    <property type="project" value="Ensembl"/>
</dbReference>
<dbReference type="GO" id="GO:0048646">
    <property type="term" value="P:anatomical structure formation involved in morphogenesis"/>
    <property type="evidence" value="ECO:0000315"/>
    <property type="project" value="MGI"/>
</dbReference>
<dbReference type="GO" id="GO:0050853">
    <property type="term" value="P:B cell receptor signaling pathway"/>
    <property type="evidence" value="ECO:0000314"/>
    <property type="project" value="MGI"/>
</dbReference>
<dbReference type="GO" id="GO:0060670">
    <property type="term" value="P:branching involved in labyrinthine layer morphogenesis"/>
    <property type="evidence" value="ECO:0000315"/>
    <property type="project" value="MGI"/>
</dbReference>
<dbReference type="GO" id="GO:0071479">
    <property type="term" value="P:cellular response to ionizing radiation"/>
    <property type="evidence" value="ECO:0007669"/>
    <property type="project" value="Ensembl"/>
</dbReference>
<dbReference type="GO" id="GO:0035987">
    <property type="term" value="P:endodermal cell differentiation"/>
    <property type="evidence" value="ECO:0000315"/>
    <property type="project" value="MGI"/>
</dbReference>
<dbReference type="GO" id="GO:0007173">
    <property type="term" value="P:epidermal growth factor receptor signaling pathway"/>
    <property type="evidence" value="ECO:0000316"/>
    <property type="project" value="MGI"/>
</dbReference>
<dbReference type="GO" id="GO:0038133">
    <property type="term" value="P:ERBB2-ERBB3 signaling pathway"/>
    <property type="evidence" value="ECO:0000266"/>
    <property type="project" value="MGI"/>
</dbReference>
<dbReference type="GO" id="GO:0008543">
    <property type="term" value="P:fibroblast growth factor receptor signaling pathway"/>
    <property type="evidence" value="ECO:0000316"/>
    <property type="project" value="MGI"/>
</dbReference>
<dbReference type="GO" id="GO:0008286">
    <property type="term" value="P:insulin receptor signaling pathway"/>
    <property type="evidence" value="ECO:0000314"/>
    <property type="project" value="MGI"/>
</dbReference>
<dbReference type="GO" id="GO:0048009">
    <property type="term" value="P:insulin-like growth factor receptor signaling pathway"/>
    <property type="evidence" value="ECO:0000314"/>
    <property type="project" value="MGI"/>
</dbReference>
<dbReference type="GO" id="GO:0042552">
    <property type="term" value="P:myelination"/>
    <property type="evidence" value="ECO:0000315"/>
    <property type="project" value="MGI"/>
</dbReference>
<dbReference type="GO" id="GO:0042267">
    <property type="term" value="P:natural killer cell mediated cytotoxicity"/>
    <property type="evidence" value="ECO:0007669"/>
    <property type="project" value="Ensembl"/>
</dbReference>
<dbReference type="GO" id="GO:0045953">
    <property type="term" value="P:negative regulation of natural killer cell mediated cytotoxicity"/>
    <property type="evidence" value="ECO:0007669"/>
    <property type="project" value="Ensembl"/>
</dbReference>
<dbReference type="GO" id="GO:0030838">
    <property type="term" value="P:positive regulation of actin filament polymerization"/>
    <property type="evidence" value="ECO:0000316"/>
    <property type="project" value="MGI"/>
</dbReference>
<dbReference type="GO" id="GO:2000379">
    <property type="term" value="P:positive regulation of reactive oxygen species metabolic process"/>
    <property type="evidence" value="ECO:0007669"/>
    <property type="project" value="Ensembl"/>
</dbReference>
<dbReference type="GO" id="GO:0007265">
    <property type="term" value="P:Ras protein signal transduction"/>
    <property type="evidence" value="ECO:0000304"/>
    <property type="project" value="MGI"/>
</dbReference>
<dbReference type="GO" id="GO:0031623">
    <property type="term" value="P:receptor internalization"/>
    <property type="evidence" value="ECO:0007669"/>
    <property type="project" value="Ensembl"/>
</dbReference>
<dbReference type="GO" id="GO:0043408">
    <property type="term" value="P:regulation of MAPK cascade"/>
    <property type="evidence" value="ECO:0000316"/>
    <property type="project" value="MGI"/>
</dbReference>
<dbReference type="GO" id="GO:0014044">
    <property type="term" value="P:Schwann cell development"/>
    <property type="evidence" value="ECO:0000315"/>
    <property type="project" value="MGI"/>
</dbReference>
<dbReference type="GO" id="GO:0042770">
    <property type="term" value="P:signal transduction in response to DNA damage"/>
    <property type="evidence" value="ECO:0007669"/>
    <property type="project" value="Ensembl"/>
</dbReference>
<dbReference type="GO" id="GO:0042110">
    <property type="term" value="P:T cell activation"/>
    <property type="evidence" value="ECO:0007669"/>
    <property type="project" value="Ensembl"/>
</dbReference>
<dbReference type="CDD" id="cd09941">
    <property type="entry name" value="SH2_Grb2_like"/>
    <property type="match status" value="1"/>
</dbReference>
<dbReference type="CDD" id="cd11949">
    <property type="entry name" value="SH3_GRB2_C"/>
    <property type="match status" value="1"/>
</dbReference>
<dbReference type="CDD" id="cd11946">
    <property type="entry name" value="SH3_GRB2_N"/>
    <property type="match status" value="1"/>
</dbReference>
<dbReference type="FunFam" id="2.30.30.40:FF:000067">
    <property type="entry name" value="Growth factor receptor-bound protein 2"/>
    <property type="match status" value="1"/>
</dbReference>
<dbReference type="FunFam" id="2.30.30.40:FF:000076">
    <property type="entry name" value="Growth factor receptor-bound protein 2"/>
    <property type="match status" value="1"/>
</dbReference>
<dbReference type="FunFam" id="3.30.505.10:FF:000022">
    <property type="entry name" value="Growth factor receptor-bound protein 2"/>
    <property type="match status" value="1"/>
</dbReference>
<dbReference type="Gene3D" id="3.30.505.10">
    <property type="entry name" value="SH2 domain"/>
    <property type="match status" value="1"/>
</dbReference>
<dbReference type="Gene3D" id="2.30.30.40">
    <property type="entry name" value="SH3 Domains"/>
    <property type="match status" value="2"/>
</dbReference>
<dbReference type="InterPro" id="IPR043539">
    <property type="entry name" value="Grb2-like"/>
</dbReference>
<dbReference type="InterPro" id="IPR035643">
    <property type="entry name" value="GRB2_C_SH3"/>
</dbReference>
<dbReference type="InterPro" id="IPR035641">
    <property type="entry name" value="GRB2_N_SH3"/>
</dbReference>
<dbReference type="InterPro" id="IPR000980">
    <property type="entry name" value="SH2"/>
</dbReference>
<dbReference type="InterPro" id="IPR036860">
    <property type="entry name" value="SH2_dom_sf"/>
</dbReference>
<dbReference type="InterPro" id="IPR036028">
    <property type="entry name" value="SH3-like_dom_sf"/>
</dbReference>
<dbReference type="InterPro" id="IPR001452">
    <property type="entry name" value="SH3_domain"/>
</dbReference>
<dbReference type="PANTHER" id="PTHR46037">
    <property type="entry name" value="PROTEIN ENHANCER OF SEVENLESS 2B"/>
    <property type="match status" value="1"/>
</dbReference>
<dbReference type="Pfam" id="PF00017">
    <property type="entry name" value="SH2"/>
    <property type="match status" value="1"/>
</dbReference>
<dbReference type="Pfam" id="PF00018">
    <property type="entry name" value="SH3_1"/>
    <property type="match status" value="2"/>
</dbReference>
<dbReference type="PRINTS" id="PR00499">
    <property type="entry name" value="P67PHOX"/>
</dbReference>
<dbReference type="PRINTS" id="PR00401">
    <property type="entry name" value="SH2DOMAIN"/>
</dbReference>
<dbReference type="PRINTS" id="PR00452">
    <property type="entry name" value="SH3DOMAIN"/>
</dbReference>
<dbReference type="SMART" id="SM00252">
    <property type="entry name" value="SH2"/>
    <property type="match status" value="1"/>
</dbReference>
<dbReference type="SMART" id="SM00326">
    <property type="entry name" value="SH3"/>
    <property type="match status" value="2"/>
</dbReference>
<dbReference type="SUPFAM" id="SSF55550">
    <property type="entry name" value="SH2 domain"/>
    <property type="match status" value="1"/>
</dbReference>
<dbReference type="SUPFAM" id="SSF50044">
    <property type="entry name" value="SH3-domain"/>
    <property type="match status" value="1"/>
</dbReference>
<dbReference type="PROSITE" id="PS50001">
    <property type="entry name" value="SH2"/>
    <property type="match status" value="1"/>
</dbReference>
<dbReference type="PROSITE" id="PS50002">
    <property type="entry name" value="SH3"/>
    <property type="match status" value="2"/>
</dbReference>
<name>GRB2_MOUSE</name>